<feature type="signal peptide" evidence="2">
    <location>
        <begin position="1"/>
        <end position="29"/>
    </location>
</feature>
<feature type="chain" id="PRO_0000003896" description="Protocadherin alpha-7">
    <location>
        <begin position="30"/>
        <end position="937"/>
    </location>
</feature>
<feature type="topological domain" description="Extracellular" evidence="1">
    <location>
        <begin position="30"/>
        <end position="697"/>
    </location>
</feature>
<feature type="transmembrane region" description="Helical" evidence="2">
    <location>
        <begin position="698"/>
        <end position="718"/>
    </location>
</feature>
<feature type="topological domain" description="Cytoplasmic" evidence="1">
    <location>
        <begin position="719"/>
        <end position="937"/>
    </location>
</feature>
<feature type="domain" description="Cadherin 1" evidence="3">
    <location>
        <begin position="30"/>
        <end position="133"/>
    </location>
</feature>
<feature type="domain" description="Cadherin 2" evidence="3">
    <location>
        <begin position="134"/>
        <end position="242"/>
    </location>
</feature>
<feature type="domain" description="Cadherin 3" evidence="3">
    <location>
        <begin position="243"/>
        <end position="350"/>
    </location>
</feature>
<feature type="domain" description="Cadherin 4" evidence="3">
    <location>
        <begin position="351"/>
        <end position="455"/>
    </location>
</feature>
<feature type="domain" description="Cadherin 5" evidence="3">
    <location>
        <begin position="456"/>
        <end position="565"/>
    </location>
</feature>
<feature type="domain" description="Cadherin 6" evidence="3">
    <location>
        <begin position="581"/>
        <end position="678"/>
    </location>
</feature>
<feature type="repeat" description="PXXP 1">
    <location>
        <begin position="774"/>
        <end position="777"/>
    </location>
</feature>
<feature type="repeat" description="PXXP 2">
    <location>
        <begin position="786"/>
        <end position="789"/>
    </location>
</feature>
<feature type="repeat" description="PXXP 3">
    <location>
        <begin position="819"/>
        <end position="822"/>
    </location>
</feature>
<feature type="repeat" description="PXXP 4">
    <location>
        <begin position="860"/>
        <end position="863"/>
    </location>
</feature>
<feature type="repeat" description="PXXP 5">
    <location>
        <begin position="878"/>
        <end position="881"/>
    </location>
</feature>
<feature type="region of interest" description="Disordered" evidence="4">
    <location>
        <begin position="755"/>
        <end position="795"/>
    </location>
</feature>
<feature type="region of interest" description="5 X 4 AA repeats of P-X-X-P">
    <location>
        <begin position="774"/>
        <end position="881"/>
    </location>
</feature>
<feature type="region of interest" description="Disordered" evidence="4">
    <location>
        <begin position="814"/>
        <end position="937"/>
    </location>
</feature>
<feature type="compositionally biased region" description="Polar residues" evidence="4">
    <location>
        <begin position="775"/>
        <end position="787"/>
    </location>
</feature>
<feature type="compositionally biased region" description="Basic and acidic residues" evidence="4">
    <location>
        <begin position="896"/>
        <end position="910"/>
    </location>
</feature>
<feature type="glycosylation site" description="N-linked (GlcNAc...) asparagine" evidence="2">
    <location>
        <position position="254"/>
    </location>
</feature>
<feature type="glycosylation site" description="N-linked (GlcNAc...) asparagine" evidence="2">
    <location>
        <position position="265"/>
    </location>
</feature>
<feature type="glycosylation site" description="N-linked (GlcNAc...) asparagine" evidence="2">
    <location>
        <position position="548"/>
    </location>
</feature>
<feature type="disulfide bond" evidence="1">
    <location>
        <begin position="96"/>
        <end position="102"/>
    </location>
</feature>
<feature type="splice variant" id="VSP_000684" description="In isoform 2." evidence="5">
    <original>PRQP</original>
    <variation>VSHK</variation>
    <location>
        <begin position="786"/>
        <end position="789"/>
    </location>
</feature>
<feature type="splice variant" id="VSP_000685" description="In isoform 2." evidence="5">
    <location>
        <begin position="790"/>
        <end position="937"/>
    </location>
</feature>
<feature type="sequence variant" id="VAR_048527" description="In dbSNP:rs10067182.">
    <original>R</original>
    <variation>K</variation>
    <location>
        <position position="138"/>
    </location>
</feature>
<feature type="sequence variant" id="VAR_048528" description="In dbSNP:rs6880234.">
    <original>A</original>
    <variation>G</variation>
    <location>
        <position position="663"/>
    </location>
</feature>
<dbReference type="EMBL" id="AF152315">
    <property type="protein sequence ID" value="AAD43709.1"/>
    <property type="molecule type" value="mRNA"/>
</dbReference>
<dbReference type="EMBL" id="AF152485">
    <property type="protein sequence ID" value="AAD43746.1"/>
    <property type="molecule type" value="mRNA"/>
</dbReference>
<dbReference type="EMBL" id="AC005609">
    <property type="protein sequence ID" value="AAC34319.1"/>
    <property type="molecule type" value="Genomic_DNA"/>
</dbReference>
<dbReference type="CCDS" id="CCDS54918.1">
    <molecule id="Q9UN72-1"/>
</dbReference>
<dbReference type="RefSeq" id="NP_061733.1">
    <molecule id="Q9UN72-1"/>
    <property type="nucleotide sequence ID" value="NM_018910.3"/>
</dbReference>
<dbReference type="RefSeq" id="NP_114040.1">
    <molecule id="Q9UN72-2"/>
    <property type="nucleotide sequence ID" value="NM_031852.2"/>
</dbReference>
<dbReference type="SMR" id="Q9UN72"/>
<dbReference type="BioGRID" id="121081">
    <property type="interactions" value="26"/>
</dbReference>
<dbReference type="FunCoup" id="Q9UN72">
    <property type="interactions" value="223"/>
</dbReference>
<dbReference type="IntAct" id="Q9UN72">
    <property type="interactions" value="12"/>
</dbReference>
<dbReference type="STRING" id="9606.ENSP00000436426"/>
<dbReference type="GlyCosmos" id="Q9UN72">
    <property type="glycosylation" value="3 sites, No reported glycans"/>
</dbReference>
<dbReference type="GlyGen" id="Q9UN72">
    <property type="glycosylation" value="3 sites"/>
</dbReference>
<dbReference type="iPTMnet" id="Q9UN72"/>
<dbReference type="PhosphoSitePlus" id="Q9UN72"/>
<dbReference type="BioMuta" id="PCDHA7"/>
<dbReference type="DMDM" id="13878422"/>
<dbReference type="jPOST" id="Q9UN72"/>
<dbReference type="MassIVE" id="Q9UN72"/>
<dbReference type="PaxDb" id="9606-ENSP00000436426"/>
<dbReference type="PeptideAtlas" id="Q9UN72"/>
<dbReference type="ProteomicsDB" id="85259">
    <molecule id="Q9UN72-1"/>
</dbReference>
<dbReference type="ProteomicsDB" id="85260">
    <molecule id="Q9UN72-2"/>
</dbReference>
<dbReference type="Antibodypedia" id="27161">
    <property type="antibodies" value="99 antibodies from 15 providers"/>
</dbReference>
<dbReference type="DNASU" id="56141"/>
<dbReference type="Ensembl" id="ENST00000356878.5">
    <molecule id="Q9UN72-2"/>
    <property type="protein sequence ID" value="ENSP00000349344.5"/>
    <property type="gene ID" value="ENSG00000204963.6"/>
</dbReference>
<dbReference type="Ensembl" id="ENST00000525929.2">
    <molecule id="Q9UN72-1"/>
    <property type="protein sequence ID" value="ENSP00000436426.1"/>
    <property type="gene ID" value="ENSG00000204963.6"/>
</dbReference>
<dbReference type="Ensembl" id="ENST00000708304.1">
    <molecule id="Q9UN72-2"/>
    <property type="protein sequence ID" value="ENSP00000517155.1"/>
    <property type="gene ID" value="ENSG00000291655.1"/>
</dbReference>
<dbReference type="Ensembl" id="ENST00000708305.1">
    <molecule id="Q9UN72-1"/>
    <property type="protein sequence ID" value="ENSP00000517156.1"/>
    <property type="gene ID" value="ENSG00000291655.1"/>
</dbReference>
<dbReference type="GeneID" id="56141"/>
<dbReference type="KEGG" id="hsa:56141"/>
<dbReference type="MANE-Select" id="ENST00000525929.2">
    <property type="protein sequence ID" value="ENSP00000436426.1"/>
    <property type="RefSeq nucleotide sequence ID" value="NM_018910.3"/>
    <property type="RefSeq protein sequence ID" value="NP_061733.1"/>
</dbReference>
<dbReference type="UCSC" id="uc003lhq.2">
    <molecule id="Q9UN72-1"/>
    <property type="organism name" value="human"/>
</dbReference>
<dbReference type="AGR" id="HGNC:8673"/>
<dbReference type="CTD" id="56141"/>
<dbReference type="DisGeNET" id="56141"/>
<dbReference type="GeneCards" id="PCDHA7"/>
<dbReference type="HGNC" id="HGNC:8673">
    <property type="gene designation" value="PCDHA7"/>
</dbReference>
<dbReference type="HPA" id="ENSG00000204963">
    <property type="expression patterns" value="Tissue enhanced (brain)"/>
</dbReference>
<dbReference type="MalaCards" id="PCDHA7"/>
<dbReference type="MIM" id="604966">
    <property type="type" value="gene"/>
</dbReference>
<dbReference type="MIM" id="606313">
    <property type="type" value="gene"/>
</dbReference>
<dbReference type="neXtProt" id="NX_Q9UN72"/>
<dbReference type="OpenTargets" id="ENSG00000204963"/>
<dbReference type="PharmGKB" id="PA33019"/>
<dbReference type="VEuPathDB" id="HostDB:ENSG00000204963"/>
<dbReference type="eggNOG" id="KOG3594">
    <property type="taxonomic scope" value="Eukaryota"/>
</dbReference>
<dbReference type="GeneTree" id="ENSGT00940000163312"/>
<dbReference type="HOGENOM" id="CLU_006480_3_0_1"/>
<dbReference type="InParanoid" id="Q9UN72"/>
<dbReference type="OMA" id="SEMRMPG"/>
<dbReference type="OrthoDB" id="6252479at2759"/>
<dbReference type="PAN-GO" id="Q9UN72">
    <property type="GO annotations" value="2 GO annotations based on evolutionary models"/>
</dbReference>
<dbReference type="PhylomeDB" id="Q9UN72"/>
<dbReference type="TreeFam" id="TF332299"/>
<dbReference type="PathwayCommons" id="Q9UN72"/>
<dbReference type="SignaLink" id="Q9UN72"/>
<dbReference type="SIGNOR" id="Q9UN72"/>
<dbReference type="BioGRID-ORCS" id="56141">
    <property type="hits" value="7 hits in 1094 CRISPR screens"/>
</dbReference>
<dbReference type="GenomeRNAi" id="56141"/>
<dbReference type="Pharos" id="Q9UN72">
    <property type="development level" value="Tbio"/>
</dbReference>
<dbReference type="PRO" id="PR:Q9UN72"/>
<dbReference type="Proteomes" id="UP000005640">
    <property type="component" value="Chromosome 5"/>
</dbReference>
<dbReference type="RNAct" id="Q9UN72">
    <property type="molecule type" value="protein"/>
</dbReference>
<dbReference type="Bgee" id="ENSG00000204963">
    <property type="expression patterns" value="Expressed in cortical plate and 56 other cell types or tissues"/>
</dbReference>
<dbReference type="GO" id="GO:0005886">
    <property type="term" value="C:plasma membrane"/>
    <property type="evidence" value="ECO:0000250"/>
    <property type="project" value="UniProtKB"/>
</dbReference>
<dbReference type="GO" id="GO:0005509">
    <property type="term" value="F:calcium ion binding"/>
    <property type="evidence" value="ECO:0000250"/>
    <property type="project" value="UniProtKB"/>
</dbReference>
<dbReference type="GO" id="GO:0042802">
    <property type="term" value="F:identical protein binding"/>
    <property type="evidence" value="ECO:0000250"/>
    <property type="project" value="UniProtKB"/>
</dbReference>
<dbReference type="GO" id="GO:0007155">
    <property type="term" value="P:cell adhesion"/>
    <property type="evidence" value="ECO:0000318"/>
    <property type="project" value="GO_Central"/>
</dbReference>
<dbReference type="GO" id="GO:0009988">
    <property type="term" value="P:cell-cell recognition"/>
    <property type="evidence" value="ECO:0000250"/>
    <property type="project" value="UniProtKB"/>
</dbReference>
<dbReference type="GO" id="GO:0007156">
    <property type="term" value="P:homophilic cell adhesion via plasma membrane adhesion molecules"/>
    <property type="evidence" value="ECO:0000250"/>
    <property type="project" value="UniProtKB"/>
</dbReference>
<dbReference type="GO" id="GO:0007399">
    <property type="term" value="P:nervous system development"/>
    <property type="evidence" value="ECO:0000304"/>
    <property type="project" value="ProtInc"/>
</dbReference>
<dbReference type="CDD" id="cd11304">
    <property type="entry name" value="Cadherin_repeat"/>
    <property type="match status" value="6"/>
</dbReference>
<dbReference type="FunFam" id="2.60.40.60:FF:000001">
    <property type="entry name" value="Protocadherin alpha 2"/>
    <property type="match status" value="1"/>
</dbReference>
<dbReference type="FunFam" id="2.60.40.60:FF:000002">
    <property type="entry name" value="Protocadherin alpha 2"/>
    <property type="match status" value="1"/>
</dbReference>
<dbReference type="FunFam" id="2.60.40.60:FF:000003">
    <property type="entry name" value="Protocadherin alpha 2"/>
    <property type="match status" value="1"/>
</dbReference>
<dbReference type="FunFam" id="2.60.40.60:FF:000006">
    <property type="entry name" value="Protocadherin alpha 2"/>
    <property type="match status" value="1"/>
</dbReference>
<dbReference type="FunFam" id="2.60.40.60:FF:000007">
    <property type="entry name" value="Protocadherin alpha 2"/>
    <property type="match status" value="1"/>
</dbReference>
<dbReference type="FunFam" id="2.60.40.60:FF:000076">
    <property type="entry name" value="Protocadherin alpha 2"/>
    <property type="match status" value="1"/>
</dbReference>
<dbReference type="Gene3D" id="2.60.40.60">
    <property type="entry name" value="Cadherins"/>
    <property type="match status" value="6"/>
</dbReference>
<dbReference type="InterPro" id="IPR002126">
    <property type="entry name" value="Cadherin-like_dom"/>
</dbReference>
<dbReference type="InterPro" id="IPR015919">
    <property type="entry name" value="Cadherin-like_sf"/>
</dbReference>
<dbReference type="InterPro" id="IPR031904">
    <property type="entry name" value="Cadherin_CBD"/>
</dbReference>
<dbReference type="InterPro" id="IPR020894">
    <property type="entry name" value="Cadherin_CS"/>
</dbReference>
<dbReference type="InterPro" id="IPR013164">
    <property type="entry name" value="Cadherin_N"/>
</dbReference>
<dbReference type="InterPro" id="IPR050174">
    <property type="entry name" value="Protocadherin/Cadherin-CA"/>
</dbReference>
<dbReference type="PANTHER" id="PTHR24028">
    <property type="entry name" value="CADHERIN-87A"/>
    <property type="match status" value="1"/>
</dbReference>
<dbReference type="PANTHER" id="PTHR24028:SF225">
    <property type="entry name" value="PROTOCADHERIN ALPHA-7"/>
    <property type="match status" value="1"/>
</dbReference>
<dbReference type="Pfam" id="PF00028">
    <property type="entry name" value="Cadherin"/>
    <property type="match status" value="5"/>
</dbReference>
<dbReference type="Pfam" id="PF08266">
    <property type="entry name" value="Cadherin_2"/>
    <property type="match status" value="1"/>
</dbReference>
<dbReference type="Pfam" id="PF15974">
    <property type="entry name" value="Cadherin_tail"/>
    <property type="match status" value="1"/>
</dbReference>
<dbReference type="PRINTS" id="PR00205">
    <property type="entry name" value="CADHERIN"/>
</dbReference>
<dbReference type="SMART" id="SM00112">
    <property type="entry name" value="CA"/>
    <property type="match status" value="6"/>
</dbReference>
<dbReference type="SUPFAM" id="SSF49313">
    <property type="entry name" value="Cadherin-like"/>
    <property type="match status" value="6"/>
</dbReference>
<dbReference type="PROSITE" id="PS00232">
    <property type="entry name" value="CADHERIN_1"/>
    <property type="match status" value="5"/>
</dbReference>
<dbReference type="PROSITE" id="PS50268">
    <property type="entry name" value="CADHERIN_2"/>
    <property type="match status" value="6"/>
</dbReference>
<gene>
    <name evidence="7" type="primary">PCDHA7</name>
    <name evidence="7" type="synonym">CNRS4</name>
</gene>
<accession>Q9UN72</accession>
<accession>O75282</accession>
<comment type="function">
    <text evidence="1">Calcium-dependent cell-adhesion protein involved in cells self-recognition and non-self discrimination. Thereby, it is involved in the establishment and maintenance of specific neuronal connections in the brain.</text>
</comment>
<comment type="subunit">
    <text evidence="1">Forms homodimers in trans (molecules expressed by two different cells). Forms promiscuous heterodimers in cis (at the plasma membrane of the same cell) with other protocadherins.</text>
</comment>
<comment type="subcellular location">
    <subcellularLocation>
        <location evidence="1">Cell membrane</location>
        <topology evidence="1">Single-pass type I membrane protein</topology>
    </subcellularLocation>
</comment>
<comment type="alternative products">
    <event type="alternative splicing"/>
    <isoform>
        <id>Q9UN72-1</id>
        <name>1</name>
        <sequence type="displayed"/>
    </isoform>
    <isoform>
        <id>Q9UN72-2</id>
        <name>2</name>
        <sequence type="described" ref="VSP_000684 VSP_000685"/>
    </isoform>
</comment>
<comment type="domain">
    <text evidence="1">Cadherin 1 to cadherin 4 domains mediate homophilic trans-interaction, the interaction with an identical protocadherin expressed by a neighboring cell. This is a head-to-tail interaction, the cadherin 1 domain interacting with the cadherin 4 domain and the cadherin 2 domain interacting the cadherin 3 domain of the other protocadherin. The cadherin 6 domain mediates promiscuous interactions with protocadherins on the same cell membrane. Each cadherin domain binds three calcium ions.</text>
</comment>
<keyword id="KW-0025">Alternative splicing</keyword>
<keyword id="KW-0106">Calcium</keyword>
<keyword id="KW-0130">Cell adhesion</keyword>
<keyword id="KW-1003">Cell membrane</keyword>
<keyword id="KW-1015">Disulfide bond</keyword>
<keyword id="KW-0325">Glycoprotein</keyword>
<keyword id="KW-0472">Membrane</keyword>
<keyword id="KW-0479">Metal-binding</keyword>
<keyword id="KW-1185">Reference proteome</keyword>
<keyword id="KW-0677">Repeat</keyword>
<keyword id="KW-0732">Signal</keyword>
<keyword id="KW-0812">Transmembrane</keyword>
<keyword id="KW-1133">Transmembrane helix</keyword>
<reference key="1">
    <citation type="journal article" date="1999" name="Cell">
        <title>A striking organization of a large family of human neural cadherin-like cell adhesion genes.</title>
        <authorList>
            <person name="Wu Q."/>
            <person name="Maniatis T."/>
        </authorList>
    </citation>
    <scope>NUCLEOTIDE SEQUENCE [MRNA] (ISOFORMS 1 AND 2)</scope>
    <source>
        <tissue>Brain</tissue>
    </source>
</reference>
<reference key="2">
    <citation type="journal article" date="2004" name="Nature">
        <title>The DNA sequence and comparative analysis of human chromosome 5.</title>
        <authorList>
            <person name="Schmutz J."/>
            <person name="Martin J."/>
            <person name="Terry A."/>
            <person name="Couronne O."/>
            <person name="Grimwood J."/>
            <person name="Lowry S."/>
            <person name="Gordon L.A."/>
            <person name="Scott D."/>
            <person name="Xie G."/>
            <person name="Huang W."/>
            <person name="Hellsten U."/>
            <person name="Tran-Gyamfi M."/>
            <person name="She X."/>
            <person name="Prabhakar S."/>
            <person name="Aerts A."/>
            <person name="Altherr M."/>
            <person name="Bajorek E."/>
            <person name="Black S."/>
            <person name="Branscomb E."/>
            <person name="Caoile C."/>
            <person name="Challacombe J.F."/>
            <person name="Chan Y.M."/>
            <person name="Denys M."/>
            <person name="Detter J.C."/>
            <person name="Escobar J."/>
            <person name="Flowers D."/>
            <person name="Fotopulos D."/>
            <person name="Glavina T."/>
            <person name="Gomez M."/>
            <person name="Gonzales E."/>
            <person name="Goodstein D."/>
            <person name="Grigoriev I."/>
            <person name="Groza M."/>
            <person name="Hammon N."/>
            <person name="Hawkins T."/>
            <person name="Haydu L."/>
            <person name="Israni S."/>
            <person name="Jett J."/>
            <person name="Kadner K."/>
            <person name="Kimball H."/>
            <person name="Kobayashi A."/>
            <person name="Lopez F."/>
            <person name="Lou Y."/>
            <person name="Martinez D."/>
            <person name="Medina C."/>
            <person name="Morgan J."/>
            <person name="Nandkeshwar R."/>
            <person name="Noonan J.P."/>
            <person name="Pitluck S."/>
            <person name="Pollard M."/>
            <person name="Predki P."/>
            <person name="Priest J."/>
            <person name="Ramirez L."/>
            <person name="Retterer J."/>
            <person name="Rodriguez A."/>
            <person name="Rogers S."/>
            <person name="Salamov A."/>
            <person name="Salazar A."/>
            <person name="Thayer N."/>
            <person name="Tice H."/>
            <person name="Tsai M."/>
            <person name="Ustaszewska A."/>
            <person name="Vo N."/>
            <person name="Wheeler J."/>
            <person name="Wu K."/>
            <person name="Yang J."/>
            <person name="Dickson M."/>
            <person name="Cheng J.-F."/>
            <person name="Eichler E.E."/>
            <person name="Olsen A."/>
            <person name="Pennacchio L.A."/>
            <person name="Rokhsar D.S."/>
            <person name="Richardson P."/>
            <person name="Lucas S.M."/>
            <person name="Myers R.M."/>
            <person name="Rubin E.M."/>
        </authorList>
    </citation>
    <scope>NUCLEOTIDE SEQUENCE [LARGE SCALE GENOMIC DNA]</scope>
</reference>
<name>PCDA7_HUMAN</name>
<evidence type="ECO:0000250" key="1">
    <source>
        <dbReference type="UniProtKB" id="Q91Y13"/>
    </source>
</evidence>
<evidence type="ECO:0000255" key="2"/>
<evidence type="ECO:0000255" key="3">
    <source>
        <dbReference type="PROSITE-ProRule" id="PRU00043"/>
    </source>
</evidence>
<evidence type="ECO:0000256" key="4">
    <source>
        <dbReference type="SAM" id="MobiDB-lite"/>
    </source>
</evidence>
<evidence type="ECO:0000303" key="5">
    <source>
    </source>
</evidence>
<evidence type="ECO:0000305" key="6"/>
<evidence type="ECO:0000312" key="7">
    <source>
        <dbReference type="HGNC" id="HGNC:8673"/>
    </source>
</evidence>
<proteinExistence type="evidence at transcript level"/>
<organism>
    <name type="scientific">Homo sapiens</name>
    <name type="common">Human</name>
    <dbReference type="NCBI Taxonomy" id="9606"/>
    <lineage>
        <taxon>Eukaryota</taxon>
        <taxon>Metazoa</taxon>
        <taxon>Chordata</taxon>
        <taxon>Craniata</taxon>
        <taxon>Vertebrata</taxon>
        <taxon>Euteleostomi</taxon>
        <taxon>Mammalia</taxon>
        <taxon>Eutheria</taxon>
        <taxon>Euarchontoglires</taxon>
        <taxon>Primates</taxon>
        <taxon>Haplorrhini</taxon>
        <taxon>Catarrhini</taxon>
        <taxon>Hominidae</taxon>
        <taxon>Homo</taxon>
    </lineage>
</organism>
<sequence length="937" mass="100865">MVCPNGYDPGGRHLLLFIIILAAWEAGRGQLHYSVPEEAKHGNFVGRIAQDLGLELAELVPRLFRAVCKFRGDLLEVNLQNGILFVNSRIDREELCGRSAECSIHLEVIVERPLQVFHVDVEVKDINDNPPVFPATQRNLFIAESRPLDSRFPLEGASDADIGENALLTYRLSPNEYFFLDVPTSNQQVKPLGLVLRKLLDREETPELHLLLTATDGGKPELTGTVQLLITVLDNNDNAPVFDRTLYTVKLPENVSIGTLVIHPNASDLDEGLNGDIIYSFSSDVSPDIKSKFHMDPLSGAITVIGHMDFEESRAHKIPVEAVDKGFPPLAGHCTVLVEVVDVNDNAPQLTLTSLSLPIPEDAQPGTVITLISVFDRDFGVNGQVTCSLTPRVPFKLVSTFKNYYSLVLDSALDRESVSAYELVVTARDGGSPSLWATASVSVEVADVNDNAPAFAQPEYTVFVKENNPPGCHIFTVSAGDADAQKNALVSYSLVELRVGERALSSYVSVHAESGKVYALQPLDHEELELLQFQVSARDAGVPPLGSNVTLQVFVLDENDNAPALLAPRVGGTGGAVRELVPRSVGAGHVVAKVRAVDADSGYNAWLSYELQPVAAGASIPFRVGLYTGEISTTRALDETDAPRHRLLVLVKDHGEPSLTATATVLVSLVESGQAPKASSRASLGIAGPETELVDVNVYLIIAICAVSSLLVLTLLLYTALRCSAPSSEGACSLVKPTLVCSSAVGSWSFSQQRRQRVCSGEGPPKTDLMAFSPSLPQGPSSTDNPRQPNPDWRYSASLRAGMHSSVHLEEAGILRAGPGGPDQQWPTVSSATPEPEAGEVSPPVGAGVNSNSWTFKYGPGNPKQSGPGELPDKFIIPGSPAIISIRQEPTNSQIDKSDFITFGKKEETKKKKKKKKGNKTQEKKEKGNSTTDNSDQ</sequence>
<protein>
    <recommendedName>
        <fullName evidence="6">Protocadherin alpha-7</fullName>
        <shortName evidence="6">PCDH-alpha-7</shortName>
    </recommendedName>
</protein>